<name>RS7_NOCSJ</name>
<dbReference type="EMBL" id="CP000509">
    <property type="protein sequence ID" value="ABL83422.1"/>
    <property type="molecule type" value="Genomic_DNA"/>
</dbReference>
<dbReference type="RefSeq" id="WP_011757352.1">
    <property type="nucleotide sequence ID" value="NC_008699.1"/>
</dbReference>
<dbReference type="SMR" id="A1SNN7"/>
<dbReference type="STRING" id="196162.Noca_3924"/>
<dbReference type="KEGG" id="nca:Noca_3924"/>
<dbReference type="eggNOG" id="COG0049">
    <property type="taxonomic scope" value="Bacteria"/>
</dbReference>
<dbReference type="HOGENOM" id="CLU_072226_1_1_11"/>
<dbReference type="OrthoDB" id="9807653at2"/>
<dbReference type="Proteomes" id="UP000000640">
    <property type="component" value="Chromosome"/>
</dbReference>
<dbReference type="GO" id="GO:0015935">
    <property type="term" value="C:small ribosomal subunit"/>
    <property type="evidence" value="ECO:0007669"/>
    <property type="project" value="InterPro"/>
</dbReference>
<dbReference type="GO" id="GO:0019843">
    <property type="term" value="F:rRNA binding"/>
    <property type="evidence" value="ECO:0007669"/>
    <property type="project" value="UniProtKB-UniRule"/>
</dbReference>
<dbReference type="GO" id="GO:0003735">
    <property type="term" value="F:structural constituent of ribosome"/>
    <property type="evidence" value="ECO:0007669"/>
    <property type="project" value="InterPro"/>
</dbReference>
<dbReference type="GO" id="GO:0000049">
    <property type="term" value="F:tRNA binding"/>
    <property type="evidence" value="ECO:0007669"/>
    <property type="project" value="UniProtKB-UniRule"/>
</dbReference>
<dbReference type="GO" id="GO:0006412">
    <property type="term" value="P:translation"/>
    <property type="evidence" value="ECO:0007669"/>
    <property type="project" value="UniProtKB-UniRule"/>
</dbReference>
<dbReference type="CDD" id="cd14869">
    <property type="entry name" value="uS7_Bacteria"/>
    <property type="match status" value="1"/>
</dbReference>
<dbReference type="FunFam" id="1.10.455.10:FF:000001">
    <property type="entry name" value="30S ribosomal protein S7"/>
    <property type="match status" value="1"/>
</dbReference>
<dbReference type="Gene3D" id="1.10.455.10">
    <property type="entry name" value="Ribosomal protein S7 domain"/>
    <property type="match status" value="1"/>
</dbReference>
<dbReference type="HAMAP" id="MF_00480_B">
    <property type="entry name" value="Ribosomal_uS7_B"/>
    <property type="match status" value="1"/>
</dbReference>
<dbReference type="InterPro" id="IPR000235">
    <property type="entry name" value="Ribosomal_uS7"/>
</dbReference>
<dbReference type="InterPro" id="IPR005717">
    <property type="entry name" value="Ribosomal_uS7_bac/org-type"/>
</dbReference>
<dbReference type="InterPro" id="IPR020606">
    <property type="entry name" value="Ribosomal_uS7_CS"/>
</dbReference>
<dbReference type="InterPro" id="IPR023798">
    <property type="entry name" value="Ribosomal_uS7_dom"/>
</dbReference>
<dbReference type="InterPro" id="IPR036823">
    <property type="entry name" value="Ribosomal_uS7_dom_sf"/>
</dbReference>
<dbReference type="NCBIfam" id="TIGR01029">
    <property type="entry name" value="rpsG_bact"/>
    <property type="match status" value="1"/>
</dbReference>
<dbReference type="PANTHER" id="PTHR11205">
    <property type="entry name" value="RIBOSOMAL PROTEIN S7"/>
    <property type="match status" value="1"/>
</dbReference>
<dbReference type="Pfam" id="PF00177">
    <property type="entry name" value="Ribosomal_S7"/>
    <property type="match status" value="1"/>
</dbReference>
<dbReference type="PIRSF" id="PIRSF002122">
    <property type="entry name" value="RPS7p_RPS7a_RPS5e_RPS7o"/>
    <property type="match status" value="1"/>
</dbReference>
<dbReference type="SUPFAM" id="SSF47973">
    <property type="entry name" value="Ribosomal protein S7"/>
    <property type="match status" value="1"/>
</dbReference>
<dbReference type="PROSITE" id="PS00052">
    <property type="entry name" value="RIBOSOMAL_S7"/>
    <property type="match status" value="1"/>
</dbReference>
<sequence length="156" mass="17452">MPRKGPAPKRPIDIDPVYGSQLVSQLVSKVLQDGKKQVAQRIVYTALEGCREKTGTDPVVTLKRALDNVKPAIEVKSRRVGGATYQVPIEVKGTRGTTLALRWLVGYAQDRREKTMHERLMNEILDASNGLGAAVKKREDTHKMAESNKAFAHYRW</sequence>
<organism>
    <name type="scientific">Nocardioides sp. (strain ATCC BAA-499 / JS614)</name>
    <dbReference type="NCBI Taxonomy" id="196162"/>
    <lineage>
        <taxon>Bacteria</taxon>
        <taxon>Bacillati</taxon>
        <taxon>Actinomycetota</taxon>
        <taxon>Actinomycetes</taxon>
        <taxon>Propionibacteriales</taxon>
        <taxon>Nocardioidaceae</taxon>
        <taxon>Nocardioides</taxon>
    </lineage>
</organism>
<gene>
    <name evidence="1" type="primary">rpsG</name>
    <name type="ordered locus">Noca_3924</name>
</gene>
<comment type="function">
    <text evidence="1">One of the primary rRNA binding proteins, it binds directly to 16S rRNA where it nucleates assembly of the head domain of the 30S subunit. Is located at the subunit interface close to the decoding center, probably blocks exit of the E-site tRNA.</text>
</comment>
<comment type="subunit">
    <text evidence="1">Part of the 30S ribosomal subunit. Contacts proteins S9 and S11.</text>
</comment>
<comment type="similarity">
    <text evidence="1">Belongs to the universal ribosomal protein uS7 family.</text>
</comment>
<protein>
    <recommendedName>
        <fullName evidence="1">Small ribosomal subunit protein uS7</fullName>
    </recommendedName>
    <alternativeName>
        <fullName evidence="2">30S ribosomal protein S7</fullName>
    </alternativeName>
</protein>
<reference key="1">
    <citation type="submission" date="2006-12" db="EMBL/GenBank/DDBJ databases">
        <title>Complete sequence of chromosome 1 of Nocardioides sp. JS614.</title>
        <authorList>
            <person name="Copeland A."/>
            <person name="Lucas S."/>
            <person name="Lapidus A."/>
            <person name="Barry K."/>
            <person name="Detter J.C."/>
            <person name="Glavina del Rio T."/>
            <person name="Hammon N."/>
            <person name="Israni S."/>
            <person name="Dalin E."/>
            <person name="Tice H."/>
            <person name="Pitluck S."/>
            <person name="Thompson L.S."/>
            <person name="Brettin T."/>
            <person name="Bruce D."/>
            <person name="Han C."/>
            <person name="Tapia R."/>
            <person name="Schmutz J."/>
            <person name="Larimer F."/>
            <person name="Land M."/>
            <person name="Hauser L."/>
            <person name="Kyrpides N."/>
            <person name="Kim E."/>
            <person name="Mattes T."/>
            <person name="Gossett J."/>
            <person name="Richardson P."/>
        </authorList>
    </citation>
    <scope>NUCLEOTIDE SEQUENCE [LARGE SCALE GENOMIC DNA]</scope>
    <source>
        <strain>ATCC BAA-499 / JS614</strain>
    </source>
</reference>
<evidence type="ECO:0000255" key="1">
    <source>
        <dbReference type="HAMAP-Rule" id="MF_00480"/>
    </source>
</evidence>
<evidence type="ECO:0000305" key="2"/>
<keyword id="KW-1185">Reference proteome</keyword>
<keyword id="KW-0687">Ribonucleoprotein</keyword>
<keyword id="KW-0689">Ribosomal protein</keyword>
<keyword id="KW-0694">RNA-binding</keyword>
<keyword id="KW-0699">rRNA-binding</keyword>
<keyword id="KW-0820">tRNA-binding</keyword>
<proteinExistence type="inferred from homology"/>
<feature type="chain" id="PRO_1000014246" description="Small ribosomal subunit protein uS7">
    <location>
        <begin position="1"/>
        <end position="156"/>
    </location>
</feature>
<accession>A1SNN7</accession>